<evidence type="ECO:0000255" key="1">
    <source>
        <dbReference type="HAMAP-Rule" id="MF_01322"/>
    </source>
</evidence>
<sequence length="1413" mass="157681">MKDLLKFLKAQTKNEDFDAIKISLASPDMIRSWSFGEVKKPETINYRTFKPERDGLFCARIFGPVKDYECLCGKYKRLKHRGVICEKCGVEVTQSKVRRERMGHIELSSPTAHIWFLKSLPSRIGLLLDMPLRDIERVLYFESYVVIETGMTNLEKRQILTEEQYLDALEEFGDEFYATMGAEAIQSLLKDINLVKECENLRIELNETNSETKRKKLTKRIKLLESFIQSNNKPEWMILTVLPVLPPDLRPLVPLDGGRFATSDLNDLYRRVINRNNRLKRLLDLAAPDIIVRNEKRMLQEAIDALLDNGRRGRAITGSNKRPLKSLADMIKGKQGRFRQNLLGKRVDYSGRSVITVGPYLRLHQCGLPKKMALELFKPFIYGKLEVRGLATTIKAAKKMVEREEAIVWDILDEVIREHPVLLNRAPTLHRLGIQAFEPVLIEGKAIQLHPLVCAAYNADFDGDQMAVHVPLTLEAQLEARALMMSTNNILSPANGEPIIVPSQDVVLGLYYMTREKINGKGEGMILNGSNEAEKVYRLEIAELHSLVKVRITEYKKNKDQSFIPKTKIINTTIGRAILWMIVPKGLPFSIVNQTLGKKDISKMLNTCYRILGLKPTVAFADQIMYTGFAYAARSGASVGIDDMVIPVKKLNIIHEAEIEVAEIQEQFQSGLVTAGERYNKVIDIWAAANERVAKAMMENLSTESVFNKKGEKQKQISFNSIFMMADSGARGSAAQIRQLAGMRGLMAKPDGSIIETPITANFREGLNVLQYFISTHGARKGLADTALKTANSGYLTRRLVDVAQDLVVTQNDCGTHEGILMTPLIEGGDVKEPLRERVLGRVTAEKILIPNTENILIERNTLLNEQWCDLLEKNSIDNVKVRSVVNCETDFGVCAYCYGRDLARGNLVNKGEAIGVIAAQSIGEPGTQLTMRTFHIGGAASRAATESSIQIKNKGIINLNNAKSVTNSSGKIVITSRNVELNIIDNFRRTKETYKVPYGAIMAKGHGEQVNSGETVAKWDPHTIPVITEVSGFVRFVDMIDGQSITRQADELTGLSSIVVLDTAERMTIGKDLRPSLKIVDRDGNDVLISGTEMPAQYFLPGKAIVQLDDRVQISSGDTLARVPQESGGTKDITGGLPRVADLFEARRPKELAILAEISGIISFGKETKGKRRLIITPVDGSDAYEEMIPKWRQLNVFEGERVERGDVISDGPESPHDILRLRGVQAVTKYIVNEVQEVYRLQGVKINDKHIEVIIRQMLRKATVIKSGNSEFLDGEQVEFSRIKISNRILNKQSKIPATFSRDLLGITKASLATESFISAASFQETTRVLTESAVAGKKDELRGLKENVIVGRLIPAGTGYAYHKERLNRRHTVNTNQIKPNNSSSQISAEEASASLSELLNSTLIQHDHT</sequence>
<accession>P41185</accession>
<keyword id="KW-0240">DNA-directed RNA polymerase</keyword>
<keyword id="KW-0460">Magnesium</keyword>
<keyword id="KW-0479">Metal-binding</keyword>
<keyword id="KW-0548">Nucleotidyltransferase</keyword>
<keyword id="KW-0804">Transcription</keyword>
<keyword id="KW-0808">Transferase</keyword>
<keyword id="KW-0862">Zinc</keyword>
<proteinExistence type="inferred from homology"/>
<dbReference type="EC" id="2.7.7.6" evidence="1"/>
<dbReference type="EMBL" id="AE013218">
    <property type="protein sequence ID" value="AAM67605.1"/>
    <property type="molecule type" value="Genomic_DNA"/>
</dbReference>
<dbReference type="EMBL" id="Z11913">
    <property type="protein sequence ID" value="CAA77971.1"/>
    <property type="molecule type" value="Genomic_DNA"/>
</dbReference>
<dbReference type="PIR" id="S32681">
    <property type="entry name" value="S32681"/>
</dbReference>
<dbReference type="RefSeq" id="WP_011053571.1">
    <property type="nucleotide sequence ID" value="NC_004061.1"/>
</dbReference>
<dbReference type="SMR" id="P41185"/>
<dbReference type="STRING" id="198804.BUsg_034"/>
<dbReference type="GeneID" id="93003497"/>
<dbReference type="KEGG" id="bas:BUsg_034"/>
<dbReference type="eggNOG" id="COG0086">
    <property type="taxonomic scope" value="Bacteria"/>
</dbReference>
<dbReference type="HOGENOM" id="CLU_000524_3_1_6"/>
<dbReference type="Proteomes" id="UP000000416">
    <property type="component" value="Chromosome"/>
</dbReference>
<dbReference type="GO" id="GO:0000428">
    <property type="term" value="C:DNA-directed RNA polymerase complex"/>
    <property type="evidence" value="ECO:0007669"/>
    <property type="project" value="UniProtKB-KW"/>
</dbReference>
<dbReference type="GO" id="GO:0003677">
    <property type="term" value="F:DNA binding"/>
    <property type="evidence" value="ECO:0007669"/>
    <property type="project" value="UniProtKB-UniRule"/>
</dbReference>
<dbReference type="GO" id="GO:0003899">
    <property type="term" value="F:DNA-directed RNA polymerase activity"/>
    <property type="evidence" value="ECO:0007669"/>
    <property type="project" value="UniProtKB-UniRule"/>
</dbReference>
<dbReference type="GO" id="GO:0000287">
    <property type="term" value="F:magnesium ion binding"/>
    <property type="evidence" value="ECO:0007669"/>
    <property type="project" value="UniProtKB-UniRule"/>
</dbReference>
<dbReference type="GO" id="GO:0008270">
    <property type="term" value="F:zinc ion binding"/>
    <property type="evidence" value="ECO:0007669"/>
    <property type="project" value="UniProtKB-UniRule"/>
</dbReference>
<dbReference type="GO" id="GO:0006351">
    <property type="term" value="P:DNA-templated transcription"/>
    <property type="evidence" value="ECO:0007669"/>
    <property type="project" value="UniProtKB-UniRule"/>
</dbReference>
<dbReference type="CDD" id="cd02655">
    <property type="entry name" value="RNAP_beta'_C"/>
    <property type="match status" value="1"/>
</dbReference>
<dbReference type="CDD" id="cd01609">
    <property type="entry name" value="RNAP_beta'_N"/>
    <property type="match status" value="1"/>
</dbReference>
<dbReference type="FunFam" id="1.10.132.30:FF:000003">
    <property type="entry name" value="DNA-directed RNA polymerase subunit beta"/>
    <property type="match status" value="1"/>
</dbReference>
<dbReference type="FunFam" id="1.10.150.390:FF:000002">
    <property type="entry name" value="DNA-directed RNA polymerase subunit beta"/>
    <property type="match status" value="1"/>
</dbReference>
<dbReference type="FunFam" id="1.10.40.90:FF:000001">
    <property type="entry name" value="DNA-directed RNA polymerase subunit beta"/>
    <property type="match status" value="1"/>
</dbReference>
<dbReference type="FunFam" id="2.40.50.100:FF:000012">
    <property type="entry name" value="DNA-directed RNA polymerase subunit beta"/>
    <property type="match status" value="1"/>
</dbReference>
<dbReference type="FunFam" id="4.10.860.120:FF:000001">
    <property type="entry name" value="DNA-directed RNA polymerase subunit beta"/>
    <property type="match status" value="1"/>
</dbReference>
<dbReference type="Gene3D" id="1.10.132.30">
    <property type="match status" value="1"/>
</dbReference>
<dbReference type="Gene3D" id="1.10.150.390">
    <property type="match status" value="1"/>
</dbReference>
<dbReference type="Gene3D" id="1.10.1790.20">
    <property type="match status" value="1"/>
</dbReference>
<dbReference type="Gene3D" id="1.10.40.90">
    <property type="match status" value="1"/>
</dbReference>
<dbReference type="Gene3D" id="2.40.40.20">
    <property type="match status" value="1"/>
</dbReference>
<dbReference type="Gene3D" id="2.40.50.100">
    <property type="match status" value="3"/>
</dbReference>
<dbReference type="Gene3D" id="4.10.860.120">
    <property type="entry name" value="RNA polymerase II, clamp domain"/>
    <property type="match status" value="1"/>
</dbReference>
<dbReference type="Gene3D" id="1.10.274.100">
    <property type="entry name" value="RNA polymerase Rpb1, domain 3"/>
    <property type="match status" value="1"/>
</dbReference>
<dbReference type="HAMAP" id="MF_01322">
    <property type="entry name" value="RNApol_bact_RpoC"/>
    <property type="match status" value="1"/>
</dbReference>
<dbReference type="InterPro" id="IPR045867">
    <property type="entry name" value="DNA-dir_RpoC_beta_prime"/>
</dbReference>
<dbReference type="InterPro" id="IPR012754">
    <property type="entry name" value="DNA-dir_RpoC_beta_prime_bact"/>
</dbReference>
<dbReference type="InterPro" id="IPR000722">
    <property type="entry name" value="RNA_pol_asu"/>
</dbReference>
<dbReference type="InterPro" id="IPR006592">
    <property type="entry name" value="RNA_pol_N"/>
</dbReference>
<dbReference type="InterPro" id="IPR007080">
    <property type="entry name" value="RNA_pol_Rpb1_1"/>
</dbReference>
<dbReference type="InterPro" id="IPR007066">
    <property type="entry name" value="RNA_pol_Rpb1_3"/>
</dbReference>
<dbReference type="InterPro" id="IPR042102">
    <property type="entry name" value="RNA_pol_Rpb1_3_sf"/>
</dbReference>
<dbReference type="InterPro" id="IPR007083">
    <property type="entry name" value="RNA_pol_Rpb1_4"/>
</dbReference>
<dbReference type="InterPro" id="IPR007081">
    <property type="entry name" value="RNA_pol_Rpb1_5"/>
</dbReference>
<dbReference type="InterPro" id="IPR044893">
    <property type="entry name" value="RNA_pol_Rpb1_clamp_domain"/>
</dbReference>
<dbReference type="InterPro" id="IPR038120">
    <property type="entry name" value="Rpb1_funnel_sf"/>
</dbReference>
<dbReference type="NCBIfam" id="TIGR02386">
    <property type="entry name" value="rpoC_TIGR"/>
    <property type="match status" value="1"/>
</dbReference>
<dbReference type="PANTHER" id="PTHR19376">
    <property type="entry name" value="DNA-DIRECTED RNA POLYMERASE"/>
    <property type="match status" value="1"/>
</dbReference>
<dbReference type="PANTHER" id="PTHR19376:SF54">
    <property type="entry name" value="DNA-DIRECTED RNA POLYMERASE SUBUNIT BETA"/>
    <property type="match status" value="1"/>
</dbReference>
<dbReference type="Pfam" id="PF04997">
    <property type="entry name" value="RNA_pol_Rpb1_1"/>
    <property type="match status" value="1"/>
</dbReference>
<dbReference type="Pfam" id="PF00623">
    <property type="entry name" value="RNA_pol_Rpb1_2"/>
    <property type="match status" value="2"/>
</dbReference>
<dbReference type="Pfam" id="PF04983">
    <property type="entry name" value="RNA_pol_Rpb1_3"/>
    <property type="match status" value="1"/>
</dbReference>
<dbReference type="Pfam" id="PF05000">
    <property type="entry name" value="RNA_pol_Rpb1_4"/>
    <property type="match status" value="1"/>
</dbReference>
<dbReference type="Pfam" id="PF04998">
    <property type="entry name" value="RNA_pol_Rpb1_5"/>
    <property type="match status" value="1"/>
</dbReference>
<dbReference type="SMART" id="SM00663">
    <property type="entry name" value="RPOLA_N"/>
    <property type="match status" value="1"/>
</dbReference>
<dbReference type="SUPFAM" id="SSF64484">
    <property type="entry name" value="beta and beta-prime subunits of DNA dependent RNA-polymerase"/>
    <property type="match status" value="1"/>
</dbReference>
<organism>
    <name type="scientific">Buchnera aphidicola subsp. Schizaphis graminum (strain Sg)</name>
    <dbReference type="NCBI Taxonomy" id="198804"/>
    <lineage>
        <taxon>Bacteria</taxon>
        <taxon>Pseudomonadati</taxon>
        <taxon>Pseudomonadota</taxon>
        <taxon>Gammaproteobacteria</taxon>
        <taxon>Enterobacterales</taxon>
        <taxon>Erwiniaceae</taxon>
        <taxon>Buchnera</taxon>
    </lineage>
</organism>
<gene>
    <name evidence="1" type="primary">rpoC</name>
    <name type="ordered locus">BUsg_034</name>
</gene>
<protein>
    <recommendedName>
        <fullName evidence="1">DNA-directed RNA polymerase subunit beta'</fullName>
        <shortName evidence="1">RNAP subunit beta'</shortName>
        <ecNumber evidence="1">2.7.7.6</ecNumber>
    </recommendedName>
    <alternativeName>
        <fullName evidence="1">RNA polymerase subunit beta'</fullName>
    </alternativeName>
    <alternativeName>
        <fullName evidence="1">Transcriptase subunit beta'</fullName>
    </alternativeName>
</protein>
<comment type="function">
    <text evidence="1">DNA-dependent RNA polymerase catalyzes the transcription of DNA into RNA using the four ribonucleoside triphosphates as substrates.</text>
</comment>
<comment type="catalytic activity">
    <reaction evidence="1">
        <text>RNA(n) + a ribonucleoside 5'-triphosphate = RNA(n+1) + diphosphate</text>
        <dbReference type="Rhea" id="RHEA:21248"/>
        <dbReference type="Rhea" id="RHEA-COMP:14527"/>
        <dbReference type="Rhea" id="RHEA-COMP:17342"/>
        <dbReference type="ChEBI" id="CHEBI:33019"/>
        <dbReference type="ChEBI" id="CHEBI:61557"/>
        <dbReference type="ChEBI" id="CHEBI:140395"/>
        <dbReference type="EC" id="2.7.7.6"/>
    </reaction>
</comment>
<comment type="cofactor">
    <cofactor evidence="1">
        <name>Mg(2+)</name>
        <dbReference type="ChEBI" id="CHEBI:18420"/>
    </cofactor>
    <text evidence="1">Binds 1 Mg(2+) ion per subunit.</text>
</comment>
<comment type="cofactor">
    <cofactor evidence="1">
        <name>Zn(2+)</name>
        <dbReference type="ChEBI" id="CHEBI:29105"/>
    </cofactor>
    <text evidence="1">Binds 2 Zn(2+) ions per subunit.</text>
</comment>
<comment type="subunit">
    <text evidence="1">The RNAP catalytic core consists of 2 alpha, 1 beta, 1 beta' and 1 omega subunit. When a sigma factor is associated with the core the holoenzyme is formed, which can initiate transcription.</text>
</comment>
<comment type="similarity">
    <text evidence="1">Belongs to the RNA polymerase beta' chain family.</text>
</comment>
<name>RPOC_BUCAP</name>
<feature type="chain" id="PRO_0000067721" description="DNA-directed RNA polymerase subunit beta'">
    <location>
        <begin position="1"/>
        <end position="1413"/>
    </location>
</feature>
<feature type="binding site" evidence="1">
    <location>
        <position position="70"/>
    </location>
    <ligand>
        <name>Zn(2+)</name>
        <dbReference type="ChEBI" id="CHEBI:29105"/>
        <label>1</label>
    </ligand>
</feature>
<feature type="binding site" evidence="1">
    <location>
        <position position="72"/>
    </location>
    <ligand>
        <name>Zn(2+)</name>
        <dbReference type="ChEBI" id="CHEBI:29105"/>
        <label>1</label>
    </ligand>
</feature>
<feature type="binding site" evidence="1">
    <location>
        <position position="85"/>
    </location>
    <ligand>
        <name>Zn(2+)</name>
        <dbReference type="ChEBI" id="CHEBI:29105"/>
        <label>1</label>
    </ligand>
</feature>
<feature type="binding site" evidence="1">
    <location>
        <position position="88"/>
    </location>
    <ligand>
        <name>Zn(2+)</name>
        <dbReference type="ChEBI" id="CHEBI:29105"/>
        <label>1</label>
    </ligand>
</feature>
<feature type="binding site" evidence="1">
    <location>
        <position position="460"/>
    </location>
    <ligand>
        <name>Mg(2+)</name>
        <dbReference type="ChEBI" id="CHEBI:18420"/>
    </ligand>
</feature>
<feature type="binding site" evidence="1">
    <location>
        <position position="462"/>
    </location>
    <ligand>
        <name>Mg(2+)</name>
        <dbReference type="ChEBI" id="CHEBI:18420"/>
    </ligand>
</feature>
<feature type="binding site" evidence="1">
    <location>
        <position position="464"/>
    </location>
    <ligand>
        <name>Mg(2+)</name>
        <dbReference type="ChEBI" id="CHEBI:18420"/>
    </ligand>
</feature>
<feature type="binding site" evidence="1">
    <location>
        <position position="814"/>
    </location>
    <ligand>
        <name>Zn(2+)</name>
        <dbReference type="ChEBI" id="CHEBI:29105"/>
        <label>2</label>
    </ligand>
</feature>
<feature type="binding site" evidence="1">
    <location>
        <position position="888"/>
    </location>
    <ligand>
        <name>Zn(2+)</name>
        <dbReference type="ChEBI" id="CHEBI:29105"/>
        <label>2</label>
    </ligand>
</feature>
<feature type="binding site" evidence="1">
    <location>
        <position position="895"/>
    </location>
    <ligand>
        <name>Zn(2+)</name>
        <dbReference type="ChEBI" id="CHEBI:29105"/>
        <label>2</label>
    </ligand>
</feature>
<feature type="binding site" evidence="1">
    <location>
        <position position="898"/>
    </location>
    <ligand>
        <name>Zn(2+)</name>
        <dbReference type="ChEBI" id="CHEBI:29105"/>
        <label>2</label>
    </ligand>
</feature>
<reference key="1">
    <citation type="journal article" date="2002" name="Science">
        <title>50 million years of genomic stasis in endosymbiotic bacteria.</title>
        <authorList>
            <person name="Tamas I."/>
            <person name="Klasson L."/>
            <person name="Canbaeck B."/>
            <person name="Naeslund A.K."/>
            <person name="Eriksson A.-S."/>
            <person name="Wernegreen J.J."/>
            <person name="Sandstroem J.P."/>
            <person name="Moran N.A."/>
            <person name="Andersson S.G.E."/>
        </authorList>
    </citation>
    <scope>NUCLEOTIDE SEQUENCE [LARGE SCALE GENOMIC DNA]</scope>
    <source>
        <strain>Sg</strain>
    </source>
</reference>
<reference key="2">
    <citation type="journal article" date="1992" name="Curr. Microbiol.">
        <title>Sequence analysis of an aphid endosymbiont DNA fragment containing rpoB (beta-subunit of RNA polymerase) and portions of rplL and rpoC.</title>
        <authorList>
            <person name="Clark M.A."/>
            <person name="Baumann L."/>
            <person name="Baumann P."/>
        </authorList>
    </citation>
    <scope>NUCLEOTIDE SEQUENCE [GENOMIC DNA] OF 1-209</scope>
</reference>